<dbReference type="EMBL" id="AF090075">
    <property type="protein sequence ID" value="AAD48328.1"/>
    <property type="molecule type" value="mRNA"/>
</dbReference>
<dbReference type="EMBL" id="AF090076">
    <property type="protein sequence ID" value="AAD48329.1"/>
    <property type="molecule type" value="mRNA"/>
</dbReference>
<dbReference type="EMBL" id="AF090077">
    <property type="protein sequence ID" value="AAD48330.1"/>
    <property type="molecule type" value="mRNA"/>
</dbReference>
<dbReference type="EMBL" id="AF090078">
    <property type="protein sequence ID" value="AAD48331.1"/>
    <property type="molecule type" value="mRNA"/>
</dbReference>
<dbReference type="EMBL" id="AF090079">
    <property type="protein sequence ID" value="AAD48332.1"/>
    <property type="molecule type" value="mRNA"/>
</dbReference>
<dbReference type="EMBL" id="AF090080">
    <property type="protein sequence ID" value="AAD48333.1"/>
    <property type="molecule type" value="mRNA"/>
</dbReference>
<dbReference type="EMBL" id="AF089982">
    <property type="protein sequence ID" value="AAD48237.1"/>
    <property type="molecule type" value="mRNA"/>
</dbReference>
<dbReference type="EMBL" id="AF089984">
    <property type="protein sequence ID" value="AAD48239.1"/>
    <property type="molecule type" value="mRNA"/>
</dbReference>
<dbReference type="SMR" id="Q9TVR4"/>
<dbReference type="ConoServer" id="1050">
    <property type="toxin name" value="ABVII precursor"/>
</dbReference>
<dbReference type="ConoServer" id="959">
    <property type="toxin name" value="ABVII precursor"/>
</dbReference>
<dbReference type="ConoServer" id="961">
    <property type="toxin name" value="ABVII precursor"/>
</dbReference>
<dbReference type="GO" id="GO:0005576">
    <property type="term" value="C:extracellular region"/>
    <property type="evidence" value="ECO:0007669"/>
    <property type="project" value="UniProtKB-SubCell"/>
</dbReference>
<dbReference type="GO" id="GO:0008200">
    <property type="term" value="F:ion channel inhibitor activity"/>
    <property type="evidence" value="ECO:0007669"/>
    <property type="project" value="InterPro"/>
</dbReference>
<dbReference type="GO" id="GO:0090729">
    <property type="term" value="F:toxin activity"/>
    <property type="evidence" value="ECO:0007669"/>
    <property type="project" value="UniProtKB-KW"/>
</dbReference>
<dbReference type="InterPro" id="IPR004214">
    <property type="entry name" value="Conotoxin"/>
</dbReference>
<dbReference type="Pfam" id="PF02950">
    <property type="entry name" value="Conotoxin"/>
    <property type="match status" value="1"/>
</dbReference>
<sequence>VLIIAVLFLTACQLTTAETSSRGKQKHRALRSTDKNSRMTKRCTPAGDACDATTECCILFCNLATKKCQVPTFP</sequence>
<evidence type="ECO:0000250" key="1"/>
<evidence type="ECO:0000255" key="2"/>
<evidence type="ECO:0000256" key="3">
    <source>
        <dbReference type="SAM" id="MobiDB-lite"/>
    </source>
</evidence>
<evidence type="ECO:0000305" key="4"/>
<organism>
    <name type="scientific">Conus abbreviatus</name>
    <name type="common">Abbreviated cone</name>
    <name type="synonym">Miliariconus abbreviatus</name>
    <dbReference type="NCBI Taxonomy" id="100123"/>
    <lineage>
        <taxon>Eukaryota</taxon>
        <taxon>Metazoa</taxon>
        <taxon>Spiralia</taxon>
        <taxon>Lophotrochozoa</taxon>
        <taxon>Mollusca</taxon>
        <taxon>Gastropoda</taxon>
        <taxon>Caenogastropoda</taxon>
        <taxon>Neogastropoda</taxon>
        <taxon>Conoidea</taxon>
        <taxon>Conidae</taxon>
        <taxon>Conus</taxon>
        <taxon>Virroconus</taxon>
    </lineage>
</organism>
<reference key="1">
    <citation type="journal article" date="1999" name="Proc. Natl. Acad. Sci. U.S.A.">
        <title>Molecular genetics of ecological diversification: duplication and rapid evolution of toxin genes of the venomous gastropod Conus.</title>
        <authorList>
            <person name="Duda T.F. Jr."/>
            <person name="Palumbi S.R."/>
        </authorList>
    </citation>
    <scope>NUCLEOTIDE SEQUENCE [MRNA]</scope>
    <source>
        <tissue>Venom duct</tissue>
    </source>
</reference>
<reference key="2">
    <citation type="journal article" date="2004" name="Proc. R. Soc. B">
        <title>Gene expression and feeding ecology: evolution of piscivory in the venomous gastropod genus Conus.</title>
        <authorList>
            <person name="Duda T.F. Jr."/>
            <person name="Palumbi S.R."/>
        </authorList>
    </citation>
    <scope>NUCLEOTIDE SEQUENCE [MRNA]</scope>
    <source>
        <tissue>Venom duct</tissue>
    </source>
</reference>
<keyword id="KW-0165">Cleavage on pair of basic residues</keyword>
<keyword id="KW-1015">Disulfide bond</keyword>
<keyword id="KW-0960">Knottin</keyword>
<keyword id="KW-0964">Secreted</keyword>
<keyword id="KW-0732">Signal</keyword>
<keyword id="KW-0800">Toxin</keyword>
<name>O16I_CONAB</name>
<accession>Q9TVR4</accession>
<accession>Q9UA94</accession>
<accession>Q9UA96</accession>
<protein>
    <recommendedName>
        <fullName>Conotoxin AbVII</fullName>
    </recommendedName>
</protein>
<proteinExistence type="evidence at transcript level"/>
<feature type="signal peptide" evidence="2">
    <location>
        <begin position="1" status="less than"/>
        <end position="17"/>
    </location>
</feature>
<feature type="propeptide" id="PRO_0000392126" evidence="1">
    <location>
        <begin position="18"/>
        <end position="40"/>
    </location>
</feature>
<feature type="peptide" id="PRO_0000392127" description="Conotoxin AbVII">
    <location>
        <begin position="43"/>
        <end position="74"/>
    </location>
</feature>
<feature type="region of interest" description="Disordered" evidence="3">
    <location>
        <begin position="19"/>
        <end position="41"/>
    </location>
</feature>
<feature type="disulfide bond" evidence="1">
    <location>
        <begin position="43"/>
        <end position="57"/>
    </location>
</feature>
<feature type="disulfide bond" evidence="1">
    <location>
        <begin position="50"/>
        <end position="61"/>
    </location>
</feature>
<feature type="disulfide bond" evidence="1">
    <location>
        <begin position="56"/>
        <end position="68"/>
    </location>
</feature>
<feature type="sequence conflict" description="In Ref. 1 and 2; AAD48239." evidence="4" ref="1 2">
    <original>C</original>
    <variation>R</variation>
    <location>
        <position position="12"/>
    </location>
</feature>
<feature type="sequence conflict" description="In Ref. 1 and 2; AAD48237." evidence="4" ref="1 2">
    <original>K</original>
    <variation>N</variation>
    <location>
        <position position="26"/>
    </location>
</feature>
<feature type="non-terminal residue">
    <location>
        <position position="1"/>
    </location>
</feature>
<comment type="subcellular location">
    <subcellularLocation>
        <location evidence="1">Secreted</location>
    </subcellularLocation>
</comment>
<comment type="tissue specificity">
    <text>Expressed by the venom duct.</text>
</comment>
<comment type="domain">
    <text evidence="1">The presence of a 'disulfide through disulfide knot' structurally defines this protein as a knottin.</text>
</comment>
<comment type="domain">
    <text>The cysteine framework is VI/VII (C-C-CC-C-C).</text>
</comment>
<comment type="similarity">
    <text evidence="4">Belongs to the conotoxin O1 superfamily.</text>
</comment>